<sequence>MKYILVTGGVISGVGKGVIASSFGTLLKSCGLDVTSIKIDPYINIDAGTFSPYEHGEVYVLDDGAEVDLDLGNYERFLDVTLHRDNNITTGKIYKLVIEKERTGEYLGKTVQVVPHITDAIQEWVERVAQTPVQGSSKPQVCIVELGGTIGDIEGMPFVEAFRQFQFRVKRENFCLAHVSLVPLPKATGEPKTKPTQSSVRELRGCGLSPDLIVCRSEKPIGLEVKEKISNFCHVGPDQVICIHDLNSIYHVPLLMEQNGVIEYLNERLQLNIDMSKRTKCLQQWRDLARRTETVRREVCIAVVGKYTKFTDSYASVVKALQHAALAVNRKLELVFIESCLLEEETLHSEPSKYHKEWQKLCDSHGILVPGGFGSRGMEGKIRACQWARENQKPLLGICLGLQAAVIEFARNKLGLKDANTTEIDPNTANALVIDMPEHHTGQLGGTMRLGKRITVFSDGPSVIRQLYGNPKSVQERHRHRYEVNPKYVHLLEEQGMRFVGTDVDKTRMEIIELSGHPYFVATQYHPEYLSRPLKPSPPFLGLILASVDRLNQYIQRGCRLSPRQLSDASSDEEDSVVGLAGATKSLSSLKIPITPTNGISKSCNGSISTSDSEGACGGVDPTNGHK</sequence>
<reference key="1">
    <citation type="journal article" date="2000" name="Science">
        <title>The genome sequence of Drosophila melanogaster.</title>
        <authorList>
            <person name="Adams M.D."/>
            <person name="Celniker S.E."/>
            <person name="Holt R.A."/>
            <person name="Evans C.A."/>
            <person name="Gocayne J.D."/>
            <person name="Amanatides P.G."/>
            <person name="Scherer S.E."/>
            <person name="Li P.W."/>
            <person name="Hoskins R.A."/>
            <person name="Galle R.F."/>
            <person name="George R.A."/>
            <person name="Lewis S.E."/>
            <person name="Richards S."/>
            <person name="Ashburner M."/>
            <person name="Henderson S.N."/>
            <person name="Sutton G.G."/>
            <person name="Wortman J.R."/>
            <person name="Yandell M.D."/>
            <person name="Zhang Q."/>
            <person name="Chen L.X."/>
            <person name="Brandon R.C."/>
            <person name="Rogers Y.-H.C."/>
            <person name="Blazej R.G."/>
            <person name="Champe M."/>
            <person name="Pfeiffer B.D."/>
            <person name="Wan K.H."/>
            <person name="Doyle C."/>
            <person name="Baxter E.G."/>
            <person name="Helt G."/>
            <person name="Nelson C.R."/>
            <person name="Miklos G.L.G."/>
            <person name="Abril J.F."/>
            <person name="Agbayani A."/>
            <person name="An H.-J."/>
            <person name="Andrews-Pfannkoch C."/>
            <person name="Baldwin D."/>
            <person name="Ballew R.M."/>
            <person name="Basu A."/>
            <person name="Baxendale J."/>
            <person name="Bayraktaroglu L."/>
            <person name="Beasley E.M."/>
            <person name="Beeson K.Y."/>
            <person name="Benos P.V."/>
            <person name="Berman B.P."/>
            <person name="Bhandari D."/>
            <person name="Bolshakov S."/>
            <person name="Borkova D."/>
            <person name="Botchan M.R."/>
            <person name="Bouck J."/>
            <person name="Brokstein P."/>
            <person name="Brottier P."/>
            <person name="Burtis K.C."/>
            <person name="Busam D.A."/>
            <person name="Butler H."/>
            <person name="Cadieu E."/>
            <person name="Center A."/>
            <person name="Chandra I."/>
            <person name="Cherry J.M."/>
            <person name="Cawley S."/>
            <person name="Dahlke C."/>
            <person name="Davenport L.B."/>
            <person name="Davies P."/>
            <person name="de Pablos B."/>
            <person name="Delcher A."/>
            <person name="Deng Z."/>
            <person name="Mays A.D."/>
            <person name="Dew I."/>
            <person name="Dietz S.M."/>
            <person name="Dodson K."/>
            <person name="Doup L.E."/>
            <person name="Downes M."/>
            <person name="Dugan-Rocha S."/>
            <person name="Dunkov B.C."/>
            <person name="Dunn P."/>
            <person name="Durbin K.J."/>
            <person name="Evangelista C.C."/>
            <person name="Ferraz C."/>
            <person name="Ferriera S."/>
            <person name="Fleischmann W."/>
            <person name="Fosler C."/>
            <person name="Gabrielian A.E."/>
            <person name="Garg N.S."/>
            <person name="Gelbart W.M."/>
            <person name="Glasser K."/>
            <person name="Glodek A."/>
            <person name="Gong F."/>
            <person name="Gorrell J.H."/>
            <person name="Gu Z."/>
            <person name="Guan P."/>
            <person name="Harris M."/>
            <person name="Harris N.L."/>
            <person name="Harvey D.A."/>
            <person name="Heiman T.J."/>
            <person name="Hernandez J.R."/>
            <person name="Houck J."/>
            <person name="Hostin D."/>
            <person name="Houston K.A."/>
            <person name="Howland T.J."/>
            <person name="Wei M.-H."/>
            <person name="Ibegwam C."/>
            <person name="Jalali M."/>
            <person name="Kalush F."/>
            <person name="Karpen G.H."/>
            <person name="Ke Z."/>
            <person name="Kennison J.A."/>
            <person name="Ketchum K.A."/>
            <person name="Kimmel B.E."/>
            <person name="Kodira C.D."/>
            <person name="Kraft C.L."/>
            <person name="Kravitz S."/>
            <person name="Kulp D."/>
            <person name="Lai Z."/>
            <person name="Lasko P."/>
            <person name="Lei Y."/>
            <person name="Levitsky A.A."/>
            <person name="Li J.H."/>
            <person name="Li Z."/>
            <person name="Liang Y."/>
            <person name="Lin X."/>
            <person name="Liu X."/>
            <person name="Mattei B."/>
            <person name="McIntosh T.C."/>
            <person name="McLeod M.P."/>
            <person name="McPherson D."/>
            <person name="Merkulov G."/>
            <person name="Milshina N.V."/>
            <person name="Mobarry C."/>
            <person name="Morris J."/>
            <person name="Moshrefi A."/>
            <person name="Mount S.M."/>
            <person name="Moy M."/>
            <person name="Murphy B."/>
            <person name="Murphy L."/>
            <person name="Muzny D.M."/>
            <person name="Nelson D.L."/>
            <person name="Nelson D.R."/>
            <person name="Nelson K.A."/>
            <person name="Nixon K."/>
            <person name="Nusskern D.R."/>
            <person name="Pacleb J.M."/>
            <person name="Palazzolo M."/>
            <person name="Pittman G.S."/>
            <person name="Pan S."/>
            <person name="Pollard J."/>
            <person name="Puri V."/>
            <person name="Reese M.G."/>
            <person name="Reinert K."/>
            <person name="Remington K."/>
            <person name="Saunders R.D.C."/>
            <person name="Scheeler F."/>
            <person name="Shen H."/>
            <person name="Shue B.C."/>
            <person name="Siden-Kiamos I."/>
            <person name="Simpson M."/>
            <person name="Skupski M.P."/>
            <person name="Smith T.J."/>
            <person name="Spier E."/>
            <person name="Spradling A.C."/>
            <person name="Stapleton M."/>
            <person name="Strong R."/>
            <person name="Sun E."/>
            <person name="Svirskas R."/>
            <person name="Tector C."/>
            <person name="Turner R."/>
            <person name="Venter E."/>
            <person name="Wang A.H."/>
            <person name="Wang X."/>
            <person name="Wang Z.-Y."/>
            <person name="Wassarman D.A."/>
            <person name="Weinstock G.M."/>
            <person name="Weissenbach J."/>
            <person name="Williams S.M."/>
            <person name="Woodage T."/>
            <person name="Worley K.C."/>
            <person name="Wu D."/>
            <person name="Yang S."/>
            <person name="Yao Q.A."/>
            <person name="Ye J."/>
            <person name="Yeh R.-F."/>
            <person name="Zaveri J.S."/>
            <person name="Zhan M."/>
            <person name="Zhang G."/>
            <person name="Zhao Q."/>
            <person name="Zheng L."/>
            <person name="Zheng X.H."/>
            <person name="Zhong F.N."/>
            <person name="Zhong W."/>
            <person name="Zhou X."/>
            <person name="Zhu S.C."/>
            <person name="Zhu X."/>
            <person name="Smith H.O."/>
            <person name="Gibbs R.A."/>
            <person name="Myers E.W."/>
            <person name="Rubin G.M."/>
            <person name="Venter J.C."/>
        </authorList>
    </citation>
    <scope>NUCLEOTIDE SEQUENCE [LARGE SCALE GENOMIC DNA]</scope>
    <source>
        <strain>Berkeley</strain>
    </source>
</reference>
<reference key="2">
    <citation type="journal article" date="2002" name="Genome Biol.">
        <title>Annotation of the Drosophila melanogaster euchromatic genome: a systematic review.</title>
        <authorList>
            <person name="Misra S."/>
            <person name="Crosby M.A."/>
            <person name="Mungall C.J."/>
            <person name="Matthews B.B."/>
            <person name="Campbell K.S."/>
            <person name="Hradecky P."/>
            <person name="Huang Y."/>
            <person name="Kaminker J.S."/>
            <person name="Millburn G.H."/>
            <person name="Prochnik S.E."/>
            <person name="Smith C.D."/>
            <person name="Tupy J.L."/>
            <person name="Whitfield E.J."/>
            <person name="Bayraktaroglu L."/>
            <person name="Berman B.P."/>
            <person name="Bettencourt B.R."/>
            <person name="Celniker S.E."/>
            <person name="de Grey A.D.N.J."/>
            <person name="Drysdale R.A."/>
            <person name="Harris N.L."/>
            <person name="Richter J."/>
            <person name="Russo S."/>
            <person name="Schroeder A.J."/>
            <person name="Shu S.Q."/>
            <person name="Stapleton M."/>
            <person name="Yamada C."/>
            <person name="Ashburner M."/>
            <person name="Gelbart W.M."/>
            <person name="Rubin G.M."/>
            <person name="Lewis S.E."/>
        </authorList>
    </citation>
    <scope>GENOME REANNOTATION</scope>
    <scope>ALTERNATIVE SPLICING</scope>
    <source>
        <strain>Berkeley</strain>
    </source>
</reference>
<reference key="3">
    <citation type="journal article" date="2002" name="Genome Biol.">
        <title>A Drosophila full-length cDNA resource.</title>
        <authorList>
            <person name="Stapleton M."/>
            <person name="Carlson J.W."/>
            <person name="Brokstein P."/>
            <person name="Yu C."/>
            <person name="Champe M."/>
            <person name="George R.A."/>
            <person name="Guarin H."/>
            <person name="Kronmiller B."/>
            <person name="Pacleb J.M."/>
            <person name="Park S."/>
            <person name="Wan K.H."/>
            <person name="Rubin G.M."/>
            <person name="Celniker S.E."/>
        </authorList>
    </citation>
    <scope>NUCLEOTIDE SEQUENCE [LARGE SCALE MRNA] (ISOFORM 2)</scope>
    <source>
        <strain>Berkeley</strain>
        <tissue>Embryo</tissue>
    </source>
</reference>
<reference key="4">
    <citation type="submission" date="2003-01" db="EMBL/GenBank/DDBJ databases">
        <authorList>
            <person name="Stapleton M."/>
            <person name="Brokstein P."/>
            <person name="Hong L."/>
            <person name="Agbayani A."/>
            <person name="Carlson J.W."/>
            <person name="Champe M."/>
            <person name="Chavez C."/>
            <person name="Dorsett V."/>
            <person name="Dresnek D."/>
            <person name="Farfan D."/>
            <person name="Frise E."/>
            <person name="George R.A."/>
            <person name="Gonzalez M."/>
            <person name="Guarin H."/>
            <person name="Kronmiller B."/>
            <person name="Li P.W."/>
            <person name="Liao G."/>
            <person name="Miranda A."/>
            <person name="Mungall C.J."/>
            <person name="Nunoo J."/>
            <person name="Pacleb J.M."/>
            <person name="Paragas V."/>
            <person name="Park S."/>
            <person name="Patel S."/>
            <person name="Phouanenavong S."/>
            <person name="Wan K.H."/>
            <person name="Yu C."/>
            <person name="Lewis S.E."/>
            <person name="Rubin G.M."/>
            <person name="Celniker S.E."/>
        </authorList>
    </citation>
    <scope>NUCLEOTIDE SEQUENCE [LARGE SCALE MRNA] (ISOFORM 1)</scope>
    <source>
        <strain>Berkeley</strain>
        <tissue>Embryo</tissue>
    </source>
</reference>
<reference key="5">
    <citation type="journal article" date="2008" name="J. Proteome Res.">
        <title>Phosphoproteome analysis of Drosophila melanogaster embryos.</title>
        <authorList>
            <person name="Zhai B."/>
            <person name="Villen J."/>
            <person name="Beausoleil S.A."/>
            <person name="Mintseris J."/>
            <person name="Gygi S.P."/>
        </authorList>
    </citation>
    <scope>PHOSPHORYLATION [LARGE SCALE ANALYSIS] AT SER-567; SER-570; SER-571; SER-588 AND THR-595</scope>
    <scope>IDENTIFICATION BY MASS SPECTROMETRY</scope>
    <source>
        <tissue>Embryo</tissue>
    </source>
</reference>
<reference key="6">
    <citation type="journal article" date="2010" name="J. Genet. Genomics">
        <title>Intracellular compartmentation of CTP synthase in Drosophila.</title>
        <authorList>
            <person name="Liu J.L."/>
        </authorList>
    </citation>
    <scope>SUBCELLULAR LOCATION</scope>
    <scope>TISSUE SPECIFICITY</scope>
</reference>
<reference key="7">
    <citation type="journal article" date="2013" name="PLoS Genet.">
        <title>Only one isoform of Drosophila melanogaster CTP synthase forms the cytoophidium.</title>
        <authorList>
            <person name="Azzam G."/>
            <person name="Liu J.L."/>
        </authorList>
    </citation>
    <scope>FUNCTION (ISOFORM 1)</scope>
    <scope>SUBCELLULAR LOCATION (ISOFORM 1 AND 2)</scope>
    <scope>TISSUE SPECIFICITY (ISOFORM 1 AND 2)</scope>
    <scope>DEVELOPMENTAL STAGE (ISOFORM 1 AND 2)</scope>
    <scope>DISRUPTION PHENOTYPE</scope>
</reference>
<reference key="8">
    <citation type="journal article" date="2014" name="EMBO Rep.">
        <title>Ack kinase regulates CTP synthase filaments during Drosophila oogenesis.</title>
        <authorList>
            <person name="Strochlic T.I."/>
            <person name="Stavrides K.P."/>
            <person name="Thomas S.V."/>
            <person name="Nicolas E."/>
            <person name="O'Reilly A.M."/>
            <person name="Peterson J.R."/>
        </authorList>
    </citation>
    <scope>FUNCTION (ISOFORM 1)</scope>
    <scope>SUBCELLULAR LOCATION (ISOFORM 1)</scope>
</reference>
<proteinExistence type="evidence at protein level"/>
<keyword id="KW-0002">3D-structure</keyword>
<keyword id="KW-0025">Alternative splicing</keyword>
<keyword id="KW-0067">ATP-binding</keyword>
<keyword id="KW-0963">Cytoplasm</keyword>
<keyword id="KW-0315">Glutamine amidotransferase</keyword>
<keyword id="KW-0436">Ligase</keyword>
<keyword id="KW-0547">Nucleotide-binding</keyword>
<keyword id="KW-0597">Phosphoprotein</keyword>
<keyword id="KW-0665">Pyrimidine biosynthesis</keyword>
<keyword id="KW-1185">Reference proteome</keyword>
<gene>
    <name evidence="11 13" type="primary">Ctps</name>
    <name evidence="13" type="synonym">CTPsyn</name>
    <name evidence="13" type="ORF">CG45070</name>
</gene>
<organism>
    <name type="scientific">Drosophila melanogaster</name>
    <name type="common">Fruit fly</name>
    <dbReference type="NCBI Taxonomy" id="7227"/>
    <lineage>
        <taxon>Eukaryota</taxon>
        <taxon>Metazoa</taxon>
        <taxon>Ecdysozoa</taxon>
        <taxon>Arthropoda</taxon>
        <taxon>Hexapoda</taxon>
        <taxon>Insecta</taxon>
        <taxon>Pterygota</taxon>
        <taxon>Neoptera</taxon>
        <taxon>Endopterygota</taxon>
        <taxon>Diptera</taxon>
        <taxon>Brachycera</taxon>
        <taxon>Muscomorpha</taxon>
        <taxon>Ephydroidea</taxon>
        <taxon>Drosophilidae</taxon>
        <taxon>Drosophila</taxon>
        <taxon>Sophophora</taxon>
    </lineage>
</organism>
<accession>Q9VUL1</accession>
<accession>Q9VUL0</accession>
<name>PYRG_DROME</name>
<evidence type="ECO:0000250" key="1">
    <source>
        <dbReference type="UniProtKB" id="Q9NRF8"/>
    </source>
</evidence>
<evidence type="ECO:0000255" key="2">
    <source>
        <dbReference type="PROSITE-ProRule" id="PRU00605"/>
    </source>
</evidence>
<evidence type="ECO:0000256" key="3">
    <source>
        <dbReference type="SAM" id="MobiDB-lite"/>
    </source>
</evidence>
<evidence type="ECO:0000269" key="4">
    <source>
    </source>
</evidence>
<evidence type="ECO:0000269" key="5">
    <source>
    </source>
</evidence>
<evidence type="ECO:0000269" key="6">
    <source>
    </source>
</evidence>
<evidence type="ECO:0000269" key="7">
    <source>
    </source>
</evidence>
<evidence type="ECO:0000303" key="8">
    <source>
    </source>
</evidence>
<evidence type="ECO:0000303" key="9">
    <source>
    </source>
</evidence>
<evidence type="ECO:0000303" key="10">
    <source>
    </source>
</evidence>
<evidence type="ECO:0000303" key="11">
    <source>
    </source>
</evidence>
<evidence type="ECO:0000305" key="12"/>
<evidence type="ECO:0000312" key="13">
    <source>
        <dbReference type="FlyBase" id="FBgn0266452"/>
    </source>
</evidence>
<evidence type="ECO:0007829" key="14">
    <source>
        <dbReference type="PDB" id="7DPT"/>
    </source>
</evidence>
<evidence type="ECO:0007829" key="15">
    <source>
        <dbReference type="PDB" id="7WIZ"/>
    </source>
</evidence>
<evidence type="ECO:0007829" key="16">
    <source>
        <dbReference type="PDB" id="7WJ4"/>
    </source>
</evidence>
<evidence type="ECO:0007829" key="17">
    <source>
        <dbReference type="PDB" id="9IZ2"/>
    </source>
</evidence>
<comment type="function">
    <text evidence="1">Catalyzes the ATP-dependent amination of UTP to CTP with either L-glutamine or ammonia as the source of nitrogen. Constitutes the rate-limiting enzyme in the synthesis of cytosine nucleotides.</text>
</comment>
<comment type="function">
    <molecule>Isoform 1</molecule>
    <text evidence="6 7">Required for assembly of cytoophidium in female germline cells (PubMed:23459760, PubMed:25223282). In nurse cells, CTPsyn filament assembly in the cytoophidium is regulated by Ack kinase which may thereby contribute to the control of CTP production at specific stages of oogenesis and development of the nurse cell membrane (PubMed:25223282).</text>
</comment>
<comment type="catalytic activity">
    <reaction>
        <text>UTP + L-glutamine + ATP + H2O = CTP + L-glutamate + ADP + phosphate + 2 H(+)</text>
        <dbReference type="Rhea" id="RHEA:26426"/>
        <dbReference type="ChEBI" id="CHEBI:15377"/>
        <dbReference type="ChEBI" id="CHEBI:15378"/>
        <dbReference type="ChEBI" id="CHEBI:29985"/>
        <dbReference type="ChEBI" id="CHEBI:30616"/>
        <dbReference type="ChEBI" id="CHEBI:37563"/>
        <dbReference type="ChEBI" id="CHEBI:43474"/>
        <dbReference type="ChEBI" id="CHEBI:46398"/>
        <dbReference type="ChEBI" id="CHEBI:58359"/>
        <dbReference type="ChEBI" id="CHEBI:456216"/>
        <dbReference type="EC" id="6.3.4.2"/>
    </reaction>
</comment>
<comment type="pathway">
    <text>Pyrimidine metabolism; CTP biosynthesis via de novo pathway; CTP from UDP: step 2/2.</text>
</comment>
<comment type="subcellular location">
    <molecule>Isoform 1</molecule>
    <subcellularLocation>
        <location evidence="5 6">Cytoplasm</location>
    </subcellularLocation>
    <text evidence="6 7">Localizes to cytoophidium, a subcellular filamentary structure where CTP synthase is compartmentalized.</text>
</comment>
<comment type="subcellular location">
    <molecule>Isoform 2</molecule>
    <subcellularLocation>
        <location evidence="6">Cytoplasm</location>
    </subcellularLocation>
    <text evidence="6">Does not localize to cytoophidium.</text>
</comment>
<comment type="alternative products">
    <event type="alternative splicing"/>
    <isoform>
        <id>Q9VUL1-1</id>
        <name evidence="12">1</name>
        <name evidence="10 13">C</name>
        <sequence type="displayed"/>
    </isoform>
    <isoform>
        <id>Q9VUL1-2</id>
        <name evidence="12">2</name>
        <name evidence="10 13">B</name>
        <sequence type="described" ref="VSP_019897"/>
    </isoform>
</comment>
<comment type="tissue specificity">
    <text evidence="5 6">In ovary, expressed in oocytes, follicle cells and nurse cells. Also expressed in larval and adult testis (at protein level). In larvae, expressed in lymph gland, salivary gland, regions of the midgut, testis, optical lobe and trachea. Isoform 1 is expressed in adult testis, ovary, accessory gland and head. Isoform 2 is weakly expressed in ovary.</text>
</comment>
<comment type="developmental stage">
    <text evidence="6">Isoform 1 expression is high during embryogenesis, modest during larval and pupal stages and abundant in adult. Isoform 2 is expressed at low levels in 0-4h embryos and at very low levels during the rest of developmental stages and in adult.</text>
</comment>
<comment type="disruption phenotype">
    <text evidence="6">Larval lethal.</text>
</comment>
<comment type="similarity">
    <text evidence="12">Belongs to the CTP synthase family.</text>
</comment>
<protein>
    <recommendedName>
        <fullName evidence="9">CTP synthase</fullName>
        <ecNumber>6.3.4.2</ecNumber>
    </recommendedName>
    <alternativeName>
        <fullName evidence="12">CTP synthetase</fullName>
    </alternativeName>
    <alternativeName>
        <fullName evidence="12">UTP--ammonia ligase</fullName>
    </alternativeName>
</protein>
<feature type="chain" id="PRO_0000247038" description="CTP synthase">
    <location>
        <begin position="1"/>
        <end position="627"/>
    </location>
</feature>
<feature type="domain" description="Glutamine amidotransferase type-1" evidence="2">
    <location>
        <begin position="300"/>
        <end position="554"/>
    </location>
</feature>
<feature type="region of interest" description="Disordered" evidence="3">
    <location>
        <begin position="599"/>
        <end position="627"/>
    </location>
</feature>
<feature type="compositionally biased region" description="Polar residues" evidence="3">
    <location>
        <begin position="599"/>
        <end position="613"/>
    </location>
</feature>
<feature type="active site" description="For GATase activity" evidence="2">
    <location>
        <position position="399"/>
    </location>
</feature>
<feature type="active site" description="For GATase activity" evidence="2">
    <location>
        <position position="526"/>
    </location>
</feature>
<feature type="active site" description="For GATase activity" evidence="2">
    <location>
        <position position="528"/>
    </location>
</feature>
<feature type="modified residue" description="Phosphoserine" evidence="4">
    <location>
        <position position="567"/>
    </location>
</feature>
<feature type="modified residue" description="Phosphoserine" evidence="4">
    <location>
        <position position="570"/>
    </location>
</feature>
<feature type="modified residue" description="Phosphoserine" evidence="4">
    <location>
        <position position="571"/>
    </location>
</feature>
<feature type="modified residue" description="Phosphoserine" evidence="4">
    <location>
        <position position="588"/>
    </location>
</feature>
<feature type="modified residue" description="Phosphothreonine" evidence="4">
    <location>
        <position position="595"/>
    </location>
</feature>
<feature type="splice variant" id="VSP_019897" description="In isoform 2." evidence="8">
    <original>MKYILVTGGVISGVGKGVIASSFGTLLKSCGLDVTSIKIDPYINIDAGTFSPYEHG</original>
    <variation>MAPKKSTIVLNVEQFIHDIEERPAIWNRNFHCNKAFLEQMWDELSGAHKLPS</variation>
    <location>
        <begin position="1"/>
        <end position="56"/>
    </location>
</feature>
<feature type="strand" evidence="14">
    <location>
        <begin position="2"/>
        <end position="8"/>
    </location>
</feature>
<feature type="strand" evidence="14">
    <location>
        <begin position="12"/>
        <end position="15"/>
    </location>
</feature>
<feature type="helix" evidence="14">
    <location>
        <begin position="16"/>
        <end position="29"/>
    </location>
</feature>
<feature type="strand" evidence="14">
    <location>
        <begin position="34"/>
        <end position="40"/>
    </location>
</feature>
<feature type="helix" evidence="14">
    <location>
        <begin position="47"/>
        <end position="49"/>
    </location>
</feature>
<feature type="helix" evidence="14">
    <location>
        <begin position="52"/>
        <end position="55"/>
    </location>
</feature>
<feature type="strand" evidence="16">
    <location>
        <begin position="62"/>
        <end position="64"/>
    </location>
</feature>
<feature type="helix" evidence="14">
    <location>
        <begin position="69"/>
        <end position="78"/>
    </location>
</feature>
<feature type="helix" evidence="14">
    <location>
        <begin position="84"/>
        <end position="86"/>
    </location>
</feature>
<feature type="strand" evidence="14">
    <location>
        <begin position="87"/>
        <end position="89"/>
    </location>
</feature>
<feature type="helix" evidence="14">
    <location>
        <begin position="90"/>
        <end position="103"/>
    </location>
</feature>
<feature type="turn" evidence="14">
    <location>
        <begin position="104"/>
        <end position="107"/>
    </location>
</feature>
<feature type="helix" evidence="14">
    <location>
        <begin position="113"/>
        <end position="129"/>
    </location>
</feature>
<feature type="strand" evidence="14">
    <location>
        <begin position="133"/>
        <end position="136"/>
    </location>
</feature>
<feature type="strand" evidence="14">
    <location>
        <begin position="141"/>
        <end position="146"/>
    </location>
</feature>
<feature type="helix" evidence="14">
    <location>
        <begin position="153"/>
        <end position="155"/>
    </location>
</feature>
<feature type="helix" evidence="14">
    <location>
        <begin position="156"/>
        <end position="168"/>
    </location>
</feature>
<feature type="helix" evidence="14">
    <location>
        <begin position="171"/>
        <end position="173"/>
    </location>
</feature>
<feature type="strand" evidence="14">
    <location>
        <begin position="174"/>
        <end position="181"/>
    </location>
</feature>
<feature type="turn" evidence="14">
    <location>
        <begin position="186"/>
        <end position="189"/>
    </location>
</feature>
<feature type="helix" evidence="14">
    <location>
        <begin position="194"/>
        <end position="204"/>
    </location>
</feature>
<feature type="turn" evidence="14">
    <location>
        <begin position="205"/>
        <end position="207"/>
    </location>
</feature>
<feature type="strand" evidence="14">
    <location>
        <begin position="211"/>
        <end position="219"/>
    </location>
</feature>
<feature type="helix" evidence="14">
    <location>
        <begin position="223"/>
        <end position="233"/>
    </location>
</feature>
<feature type="helix" evidence="14">
    <location>
        <begin position="237"/>
        <end position="239"/>
    </location>
</feature>
<feature type="strand" evidence="14">
    <location>
        <begin position="240"/>
        <end position="244"/>
    </location>
</feature>
<feature type="strand" evidence="15">
    <location>
        <begin position="247"/>
        <end position="249"/>
    </location>
</feature>
<feature type="helix" evidence="14">
    <location>
        <begin position="251"/>
        <end position="257"/>
    </location>
</feature>
<feature type="turn" evidence="14">
    <location>
        <begin position="258"/>
        <end position="260"/>
    </location>
</feature>
<feature type="helix" evidence="14">
    <location>
        <begin position="261"/>
        <end position="268"/>
    </location>
</feature>
<feature type="helix" evidence="14">
    <location>
        <begin position="275"/>
        <end position="278"/>
    </location>
</feature>
<feature type="turn" evidence="14">
    <location>
        <begin position="279"/>
        <end position="282"/>
    </location>
</feature>
<feature type="helix" evidence="14">
    <location>
        <begin position="283"/>
        <end position="294"/>
    </location>
</feature>
<feature type="strand" evidence="14">
    <location>
        <begin position="299"/>
        <end position="306"/>
    </location>
</feature>
<feature type="helix" evidence="14">
    <location>
        <begin position="311"/>
        <end position="314"/>
    </location>
</feature>
<feature type="helix" evidence="14">
    <location>
        <begin position="315"/>
        <end position="327"/>
    </location>
</feature>
<feature type="strand" evidence="14">
    <location>
        <begin position="332"/>
        <end position="338"/>
    </location>
</feature>
<feature type="helix" evidence="14">
    <location>
        <begin position="339"/>
        <end position="342"/>
    </location>
</feature>
<feature type="helix" evidence="14">
    <location>
        <begin position="344"/>
        <end position="347"/>
    </location>
</feature>
<feature type="helix" evidence="14">
    <location>
        <begin position="351"/>
        <end position="362"/>
    </location>
</feature>
<feature type="strand" evidence="14">
    <location>
        <begin position="364"/>
        <end position="369"/>
    </location>
</feature>
<feature type="helix" evidence="14">
    <location>
        <begin position="378"/>
        <end position="390"/>
    </location>
</feature>
<feature type="strand" evidence="14">
    <location>
        <begin position="395"/>
        <end position="400"/>
    </location>
</feature>
<feature type="helix" evidence="14">
    <location>
        <begin position="401"/>
        <end position="413"/>
    </location>
</feature>
<feature type="strand" evidence="17">
    <location>
        <begin position="419"/>
        <end position="421"/>
    </location>
</feature>
<feature type="turn" evidence="14">
    <location>
        <begin position="422"/>
        <end position="424"/>
    </location>
</feature>
<feature type="strand" evidence="14">
    <location>
        <begin position="429"/>
        <end position="435"/>
    </location>
</feature>
<feature type="helix" evidence="14">
    <location>
        <begin position="437"/>
        <end position="439"/>
    </location>
</feature>
<feature type="strand" evidence="16">
    <location>
        <begin position="440"/>
        <end position="445"/>
    </location>
</feature>
<feature type="strand" evidence="14">
    <location>
        <begin position="448"/>
        <end position="456"/>
    </location>
</feature>
<feature type="helix" evidence="14">
    <location>
        <begin position="463"/>
        <end position="467"/>
    </location>
</feature>
<feature type="strand" evidence="14">
    <location>
        <begin position="472"/>
        <end position="484"/>
    </location>
</feature>
<feature type="helix" evidence="14">
    <location>
        <begin position="489"/>
        <end position="493"/>
    </location>
</feature>
<feature type="turn" evidence="14">
    <location>
        <begin position="494"/>
        <end position="496"/>
    </location>
</feature>
<feature type="strand" evidence="14">
    <location>
        <begin position="498"/>
        <end position="502"/>
    </location>
</feature>
<feature type="strand" evidence="16">
    <location>
        <begin position="504"/>
        <end position="506"/>
    </location>
</feature>
<feature type="strand" evidence="14">
    <location>
        <begin position="508"/>
        <end position="513"/>
    </location>
</feature>
<feature type="strand" evidence="14">
    <location>
        <begin position="515"/>
        <end position="518"/>
    </location>
</feature>
<feature type="strand" evidence="14">
    <location>
        <begin position="520"/>
        <end position="525"/>
    </location>
</feature>
<feature type="helix" evidence="14">
    <location>
        <begin position="527"/>
        <end position="529"/>
    </location>
</feature>
<feature type="helix" evidence="14">
    <location>
        <begin position="538"/>
        <end position="547"/>
    </location>
</feature>
<feature type="helix" evidence="14">
    <location>
        <begin position="551"/>
        <end position="555"/>
    </location>
</feature>
<dbReference type="EC" id="6.3.4.2"/>
<dbReference type="EMBL" id="AE014296">
    <property type="protein sequence ID" value="AAF49665.1"/>
    <property type="molecule type" value="Genomic_DNA"/>
</dbReference>
<dbReference type="EMBL" id="AE014296">
    <property type="protein sequence ID" value="AAF49666.1"/>
    <property type="molecule type" value="Genomic_DNA"/>
</dbReference>
<dbReference type="EMBL" id="AY058581">
    <property type="protein sequence ID" value="AAL13810.1"/>
    <property type="molecule type" value="mRNA"/>
</dbReference>
<dbReference type="EMBL" id="BT003255">
    <property type="protein sequence ID" value="AAO25012.1"/>
    <property type="molecule type" value="mRNA"/>
</dbReference>
<dbReference type="RefSeq" id="NP_001287067.1">
    <molecule id="Q9VUL1-1"/>
    <property type="nucleotide sequence ID" value="NM_001300138.1"/>
</dbReference>
<dbReference type="RefSeq" id="NP_648747.1">
    <molecule id="Q9VUL1-2"/>
    <property type="nucleotide sequence ID" value="NM_140490.4"/>
</dbReference>
<dbReference type="RefSeq" id="NP_730023.1">
    <molecule id="Q9VUL1-1"/>
    <property type="nucleotide sequence ID" value="NM_168606.2"/>
</dbReference>
<dbReference type="PDB" id="6L6Z">
    <property type="method" value="EM"/>
    <property type="resolution" value="6.09 A"/>
    <property type="chains" value="A/B/C/D/E/F/G/H=1-562"/>
</dbReference>
<dbReference type="PDB" id="6LFG">
    <property type="method" value="EM"/>
    <property type="resolution" value="9.58 A"/>
    <property type="chains" value="A/B/C/D/E/F/G/H=1-562"/>
</dbReference>
<dbReference type="PDB" id="7DPT">
    <property type="method" value="EM"/>
    <property type="resolution" value="2.48 A"/>
    <property type="chains" value="A/B/C/D=1-627"/>
</dbReference>
<dbReference type="PDB" id="7DPW">
    <property type="method" value="EM"/>
    <property type="resolution" value="2.65 A"/>
    <property type="chains" value="A/B/C/D=1-556"/>
</dbReference>
<dbReference type="PDB" id="7WIZ">
    <property type="method" value="EM"/>
    <property type="resolution" value="3.20 A"/>
    <property type="chains" value="A/B/C/D=1-556"/>
</dbReference>
<dbReference type="PDB" id="7WJ4">
    <property type="method" value="EM"/>
    <property type="resolution" value="3.15 A"/>
    <property type="chains" value="A/B/C/D=1-556"/>
</dbReference>
<dbReference type="PDB" id="9IZ1">
    <property type="method" value="EM"/>
    <property type="resolution" value="2.73 A"/>
    <property type="chains" value="A/B/C/D=1-556"/>
</dbReference>
<dbReference type="PDB" id="9IZ2">
    <property type="method" value="EM"/>
    <property type="resolution" value="2.79 A"/>
    <property type="chains" value="A/B/C=1-556"/>
</dbReference>
<dbReference type="PDBsum" id="6L6Z"/>
<dbReference type="PDBsum" id="6LFG"/>
<dbReference type="PDBsum" id="7DPT"/>
<dbReference type="PDBsum" id="7DPW"/>
<dbReference type="PDBsum" id="7WIZ"/>
<dbReference type="PDBsum" id="7WJ4"/>
<dbReference type="PDBsum" id="9IZ1"/>
<dbReference type="PDBsum" id="9IZ2"/>
<dbReference type="EMDB" id="EMD-0840"/>
<dbReference type="EMDB" id="EMD-0876"/>
<dbReference type="EMDB" id="EMD-30810"/>
<dbReference type="EMDB" id="EMD-30811"/>
<dbReference type="EMDB" id="EMD-32541"/>
<dbReference type="EMDB" id="EMD-32542"/>
<dbReference type="EMDB" id="EMD-61008"/>
<dbReference type="EMDB" id="EMD-61009"/>
<dbReference type="SMR" id="Q9VUL1"/>
<dbReference type="BioGRID" id="64967">
    <property type="interactions" value="307"/>
</dbReference>
<dbReference type="FunCoup" id="Q9VUL1">
    <property type="interactions" value="1098"/>
</dbReference>
<dbReference type="IntAct" id="Q9VUL1">
    <property type="interactions" value="31"/>
</dbReference>
<dbReference type="STRING" id="7227.FBpp0311740"/>
<dbReference type="MEROPS" id="C26.A36"/>
<dbReference type="iPTMnet" id="Q9VUL1"/>
<dbReference type="PaxDb" id="7227-FBpp0075387"/>
<dbReference type="DNASU" id="39645"/>
<dbReference type="EnsemblMetazoa" id="FBtr0344431">
    <molecule id="Q9VUL1-1"/>
    <property type="protein sequence ID" value="FBpp0310803"/>
    <property type="gene ID" value="FBgn0266452"/>
</dbReference>
<dbReference type="EnsemblMetazoa" id="FBtr0344432">
    <molecule id="Q9VUL1-2"/>
    <property type="protein sequence ID" value="FBpp0310804"/>
    <property type="gene ID" value="FBgn0266452"/>
</dbReference>
<dbReference type="EnsemblMetazoa" id="FBtr0345691">
    <molecule id="Q9VUL1-1"/>
    <property type="protein sequence ID" value="FBpp0311740"/>
    <property type="gene ID" value="FBgn0266452"/>
</dbReference>
<dbReference type="GeneID" id="39645"/>
<dbReference type="KEGG" id="dme:Dmel_CG45070"/>
<dbReference type="UCSC" id="CG6854-RB">
    <molecule id="Q9VUL1-1"/>
    <property type="organism name" value="d. melanogaster"/>
</dbReference>
<dbReference type="AGR" id="FB:FBgn0266452"/>
<dbReference type="CTD" id="39645"/>
<dbReference type="FlyBase" id="FBgn0266452">
    <property type="gene designation" value="Ctps"/>
</dbReference>
<dbReference type="VEuPathDB" id="VectorBase:FBgn0266452"/>
<dbReference type="eggNOG" id="KOG2387">
    <property type="taxonomic scope" value="Eukaryota"/>
</dbReference>
<dbReference type="GeneTree" id="ENSGT00910000144179"/>
<dbReference type="HOGENOM" id="CLU_011675_4_1_1"/>
<dbReference type="InParanoid" id="Q9VUL1"/>
<dbReference type="OMA" id="EFNNAYR"/>
<dbReference type="OrthoDB" id="1739076at2759"/>
<dbReference type="PhylomeDB" id="Q9VUL1"/>
<dbReference type="Reactome" id="R-DME-499943">
    <property type="pathway name" value="Interconversion of nucleotide di- and triphosphates"/>
</dbReference>
<dbReference type="SignaLink" id="Q9VUL1"/>
<dbReference type="UniPathway" id="UPA00159">
    <property type="reaction ID" value="UER00277"/>
</dbReference>
<dbReference type="BioGRID-ORCS" id="39645">
    <property type="hits" value="1 hit in 3 CRISPR screens"/>
</dbReference>
<dbReference type="GenomeRNAi" id="39645"/>
<dbReference type="PRO" id="PR:Q9VUL1"/>
<dbReference type="Proteomes" id="UP000000803">
    <property type="component" value="Chromosome 3L"/>
</dbReference>
<dbReference type="Bgee" id="FBgn0266452">
    <property type="expression patterns" value="Expressed in adult enteroendocrine precursor cell in adult midgut (Drosophila) and 142 other cell types or tissues"/>
</dbReference>
<dbReference type="ExpressionAtlas" id="Q9VUL1">
    <property type="expression patterns" value="baseline and differential"/>
</dbReference>
<dbReference type="GO" id="GO:0097268">
    <property type="term" value="C:cytoophidium"/>
    <property type="evidence" value="ECO:0000314"/>
    <property type="project" value="FlyBase"/>
</dbReference>
<dbReference type="GO" id="GO:0005737">
    <property type="term" value="C:cytoplasm"/>
    <property type="evidence" value="ECO:0000314"/>
    <property type="project" value="FlyBase"/>
</dbReference>
<dbReference type="GO" id="GO:0005829">
    <property type="term" value="C:cytosol"/>
    <property type="evidence" value="ECO:0007005"/>
    <property type="project" value="FlyBase"/>
</dbReference>
<dbReference type="GO" id="GO:0005524">
    <property type="term" value="F:ATP binding"/>
    <property type="evidence" value="ECO:0007669"/>
    <property type="project" value="UniProtKB-KW"/>
</dbReference>
<dbReference type="GO" id="GO:0003883">
    <property type="term" value="F:CTP synthase activity"/>
    <property type="evidence" value="ECO:0000314"/>
    <property type="project" value="FlyBase"/>
</dbReference>
<dbReference type="GO" id="GO:0042802">
    <property type="term" value="F:identical protein binding"/>
    <property type="evidence" value="ECO:0000318"/>
    <property type="project" value="GO_Central"/>
</dbReference>
<dbReference type="GO" id="GO:0044210">
    <property type="term" value="P:'de novo' CTP biosynthetic process"/>
    <property type="evidence" value="ECO:0007669"/>
    <property type="project" value="UniProtKB-UniPathway"/>
</dbReference>
<dbReference type="GO" id="GO:0006241">
    <property type="term" value="P:CTP biosynthetic process"/>
    <property type="evidence" value="ECO:0000314"/>
    <property type="project" value="FlyBase"/>
</dbReference>
<dbReference type="GO" id="GO:0035167">
    <property type="term" value="P:larval lymph gland hemopoiesis"/>
    <property type="evidence" value="ECO:0000315"/>
    <property type="project" value="FlyBase"/>
</dbReference>
<dbReference type="GO" id="GO:0019856">
    <property type="term" value="P:pyrimidine nucleobase biosynthetic process"/>
    <property type="evidence" value="ECO:0000318"/>
    <property type="project" value="GO_Central"/>
</dbReference>
<dbReference type="CDD" id="cd03113">
    <property type="entry name" value="CTPS_N"/>
    <property type="match status" value="1"/>
</dbReference>
<dbReference type="CDD" id="cd01746">
    <property type="entry name" value="GATase1_CTP_Synthase"/>
    <property type="match status" value="1"/>
</dbReference>
<dbReference type="FunFam" id="3.40.50.300:FF:000207">
    <property type="entry name" value="CTP synthase"/>
    <property type="match status" value="1"/>
</dbReference>
<dbReference type="FunFam" id="3.40.50.880:FF:000005">
    <property type="entry name" value="CTP synthase"/>
    <property type="match status" value="1"/>
</dbReference>
<dbReference type="Gene3D" id="3.40.50.880">
    <property type="match status" value="1"/>
</dbReference>
<dbReference type="Gene3D" id="3.40.50.300">
    <property type="entry name" value="P-loop containing nucleotide triphosphate hydrolases"/>
    <property type="match status" value="1"/>
</dbReference>
<dbReference type="InterPro" id="IPR029062">
    <property type="entry name" value="Class_I_gatase-like"/>
</dbReference>
<dbReference type="InterPro" id="IPR004468">
    <property type="entry name" value="CTP_synthase"/>
</dbReference>
<dbReference type="InterPro" id="IPR017456">
    <property type="entry name" value="CTP_synthase_N"/>
</dbReference>
<dbReference type="InterPro" id="IPR017926">
    <property type="entry name" value="GATASE"/>
</dbReference>
<dbReference type="InterPro" id="IPR033828">
    <property type="entry name" value="GATase1_CTP_Synthase"/>
</dbReference>
<dbReference type="InterPro" id="IPR027417">
    <property type="entry name" value="P-loop_NTPase"/>
</dbReference>
<dbReference type="NCBIfam" id="NF003792">
    <property type="entry name" value="PRK05380.1"/>
    <property type="match status" value="1"/>
</dbReference>
<dbReference type="NCBIfam" id="TIGR00337">
    <property type="entry name" value="PyrG"/>
    <property type="match status" value="1"/>
</dbReference>
<dbReference type="PANTHER" id="PTHR11550">
    <property type="entry name" value="CTP SYNTHASE"/>
    <property type="match status" value="1"/>
</dbReference>
<dbReference type="PANTHER" id="PTHR11550:SF0">
    <property type="entry name" value="CTP SYNTHASE-RELATED"/>
    <property type="match status" value="1"/>
</dbReference>
<dbReference type="Pfam" id="PF06418">
    <property type="entry name" value="CTP_synth_N"/>
    <property type="match status" value="1"/>
</dbReference>
<dbReference type="Pfam" id="PF00117">
    <property type="entry name" value="GATase"/>
    <property type="match status" value="1"/>
</dbReference>
<dbReference type="SUPFAM" id="SSF52317">
    <property type="entry name" value="Class I glutamine amidotransferase-like"/>
    <property type="match status" value="1"/>
</dbReference>
<dbReference type="SUPFAM" id="SSF52540">
    <property type="entry name" value="P-loop containing nucleoside triphosphate hydrolases"/>
    <property type="match status" value="1"/>
</dbReference>
<dbReference type="PROSITE" id="PS51273">
    <property type="entry name" value="GATASE_TYPE_1"/>
    <property type="match status" value="1"/>
</dbReference>